<proteinExistence type="inferred from homology"/>
<organism>
    <name type="scientific">Buchnera aphidicola subsp. Acyrthosiphon pisum (strain APS)</name>
    <name type="common">Acyrthosiphon pisum symbiotic bacterium</name>
    <dbReference type="NCBI Taxonomy" id="107806"/>
    <lineage>
        <taxon>Bacteria</taxon>
        <taxon>Pseudomonadati</taxon>
        <taxon>Pseudomonadota</taxon>
        <taxon>Gammaproteobacteria</taxon>
        <taxon>Enterobacterales</taxon>
        <taxon>Erwiniaceae</taxon>
        <taxon>Buchnera</taxon>
    </lineage>
</organism>
<comment type="function">
    <text evidence="1">One of the essential components for the initiation of protein synthesis. Protects formylmethionyl-tRNA from spontaneous hydrolysis and promotes its binding to the 30S ribosomal subunits. Also involved in the hydrolysis of GTP during the formation of the 70S ribosomal complex (By similarity).</text>
</comment>
<comment type="subcellular location">
    <subcellularLocation>
        <location evidence="1">Cytoplasm</location>
    </subcellularLocation>
</comment>
<comment type="similarity">
    <text evidence="3">Belongs to the TRAFAC class translation factor GTPase superfamily. Classic translation factor GTPase family. IF-2 subfamily.</text>
</comment>
<accession>P57458</accession>
<sequence length="864" mass="97518">MPDISLKVLSNEIKISIQELIKELSIIGITKTEDNYINVLEKNILLKHLESKKKYSLDTLVLQRKTRSTLRISTVGGKNKSVQVEVRKKRAYVKNNKFENESFLNEKKVIKHSMQKTSSLKNKEKKYIKNIEKIELNKSDSRSLNTKKENKLKISNKDEQNKKFNQHRESNSFDLNHKKRIKENKDIRISHKEEKQDYHLTTFLHARQAEDENDREVEIDKRNHGRILKNYRQKKNNKNFHNGRYNKEEIRTFNRNKKNSKQKNKPILLQQVFQKPESIINRDVIISNTITVSDLANKMAIKSSEVIKNMMNMGIIGTINHVLDQDTAQLIAEEMGHKVIVHRENALEELIMKDRDTGNDVSAIRAPVVTIMGHVDHGKTSLLDYIRSTKTAFYEAGGITQNIGAYHVKTDLGSITFLDTPGHSAFTAMRSRGVQITDIVILVVAADDGVMPQTIEAIQHAKEANVPVIVAINKIDKTDSDIDKVRNDLMKYNILSEEWGGENIFVSVSAKTGKGINKLLNVILLQAEMLELKAVTTGMAEGIVVESFLDKGRGPIATVLVKKGQLKKGDVILCGFEYGRIKSLRDASGNEVFSAGPSIPVEVLGLSKVPFSGDVVTVVRDEKKAREVASYRKEKSREKKLSNQNRINLENMFDDINKNNVSELKIILKSDIQGSLEAISGALLKLSTEEVKIKIIGLGIGGITETDASLALASNAIILGFNVRADTSAKKIINSEHLDLRYYSVIYDLLDEVKAAMTGLLSPEYKENIIGLAEVRNTFKSPKFGLIAGCMVTEGVIKRSNPIHILRNNIVIYEGELESLRRFKEDVNEIRNGLECGIGIKNYNDIRVGDIIEVFEVREMKRIL</sequence>
<evidence type="ECO:0000250" key="1"/>
<evidence type="ECO:0000256" key="2">
    <source>
        <dbReference type="SAM" id="MobiDB-lite"/>
    </source>
</evidence>
<evidence type="ECO:0000305" key="3"/>
<protein>
    <recommendedName>
        <fullName>Translation initiation factor IF-2</fullName>
    </recommendedName>
</protein>
<dbReference type="EMBL" id="BA000003">
    <property type="protein sequence ID" value="BAB13081.1"/>
    <property type="molecule type" value="Genomic_DNA"/>
</dbReference>
<dbReference type="RefSeq" id="NP_240195.1">
    <property type="nucleotide sequence ID" value="NC_002528.1"/>
</dbReference>
<dbReference type="RefSeq" id="WP_009874335.1">
    <property type="nucleotide sequence ID" value="NC_002528.1"/>
</dbReference>
<dbReference type="SMR" id="P57458"/>
<dbReference type="STRING" id="563178.BUAP5A_370"/>
<dbReference type="EnsemblBacteria" id="BAB13081">
    <property type="protein sequence ID" value="BAB13081"/>
    <property type="gene ID" value="BAB13081"/>
</dbReference>
<dbReference type="KEGG" id="buc:BU377"/>
<dbReference type="PATRIC" id="fig|107806.10.peg.391"/>
<dbReference type="eggNOG" id="COG0532">
    <property type="taxonomic scope" value="Bacteria"/>
</dbReference>
<dbReference type="HOGENOM" id="CLU_006301_6_3_6"/>
<dbReference type="Proteomes" id="UP000001806">
    <property type="component" value="Chromosome"/>
</dbReference>
<dbReference type="GO" id="GO:0005829">
    <property type="term" value="C:cytosol"/>
    <property type="evidence" value="ECO:0007669"/>
    <property type="project" value="TreeGrafter"/>
</dbReference>
<dbReference type="GO" id="GO:0005525">
    <property type="term" value="F:GTP binding"/>
    <property type="evidence" value="ECO:0007669"/>
    <property type="project" value="UniProtKB-KW"/>
</dbReference>
<dbReference type="GO" id="GO:0003924">
    <property type="term" value="F:GTPase activity"/>
    <property type="evidence" value="ECO:0007669"/>
    <property type="project" value="UniProtKB-UniRule"/>
</dbReference>
<dbReference type="GO" id="GO:0097216">
    <property type="term" value="F:guanosine tetraphosphate binding"/>
    <property type="evidence" value="ECO:0007669"/>
    <property type="project" value="UniProtKB-ARBA"/>
</dbReference>
<dbReference type="GO" id="GO:0003743">
    <property type="term" value="F:translation initiation factor activity"/>
    <property type="evidence" value="ECO:0007669"/>
    <property type="project" value="UniProtKB-UniRule"/>
</dbReference>
<dbReference type="CDD" id="cd01887">
    <property type="entry name" value="IF2_eIF5B"/>
    <property type="match status" value="1"/>
</dbReference>
<dbReference type="CDD" id="cd03702">
    <property type="entry name" value="IF2_mtIF2_II"/>
    <property type="match status" value="1"/>
</dbReference>
<dbReference type="CDD" id="cd03692">
    <property type="entry name" value="mtIF2_IVc"/>
    <property type="match status" value="1"/>
</dbReference>
<dbReference type="FunFam" id="2.40.30.10:FF:000007">
    <property type="entry name" value="Translation initiation factor IF-2"/>
    <property type="match status" value="1"/>
</dbReference>
<dbReference type="FunFam" id="2.40.30.10:FF:000008">
    <property type="entry name" value="Translation initiation factor IF-2"/>
    <property type="match status" value="1"/>
</dbReference>
<dbReference type="FunFam" id="3.40.50.10050:FF:000001">
    <property type="entry name" value="Translation initiation factor IF-2"/>
    <property type="match status" value="1"/>
</dbReference>
<dbReference type="FunFam" id="3.40.50.300:FF:000019">
    <property type="entry name" value="Translation initiation factor IF-2"/>
    <property type="match status" value="1"/>
</dbReference>
<dbReference type="Gene3D" id="3.40.50.300">
    <property type="entry name" value="P-loop containing nucleotide triphosphate hydrolases"/>
    <property type="match status" value="1"/>
</dbReference>
<dbReference type="Gene3D" id="3.30.56.50">
    <property type="entry name" value="Putative DNA-binding domain, N-terminal subdomain of bacterial translation initiation factor IF2"/>
    <property type="match status" value="1"/>
</dbReference>
<dbReference type="Gene3D" id="2.40.30.10">
    <property type="entry name" value="Translation factors"/>
    <property type="match status" value="2"/>
</dbReference>
<dbReference type="Gene3D" id="3.40.50.10050">
    <property type="entry name" value="Translation initiation factor IF- 2, domain 3"/>
    <property type="match status" value="1"/>
</dbReference>
<dbReference type="HAMAP" id="MF_00100_B">
    <property type="entry name" value="IF_2_B"/>
    <property type="match status" value="1"/>
</dbReference>
<dbReference type="InterPro" id="IPR009061">
    <property type="entry name" value="DNA-bd_dom_put_sf"/>
</dbReference>
<dbReference type="InterPro" id="IPR053905">
    <property type="entry name" value="EF-G-like_DII"/>
</dbReference>
<dbReference type="InterPro" id="IPR004161">
    <property type="entry name" value="EFTu-like_2"/>
</dbReference>
<dbReference type="InterPro" id="IPR013575">
    <property type="entry name" value="IF2_assoc_dom_bac"/>
</dbReference>
<dbReference type="InterPro" id="IPR044145">
    <property type="entry name" value="IF2_II"/>
</dbReference>
<dbReference type="InterPro" id="IPR006847">
    <property type="entry name" value="IF2_N"/>
</dbReference>
<dbReference type="InterPro" id="IPR027417">
    <property type="entry name" value="P-loop_NTPase"/>
</dbReference>
<dbReference type="InterPro" id="IPR005225">
    <property type="entry name" value="Small_GTP-bd"/>
</dbReference>
<dbReference type="InterPro" id="IPR000795">
    <property type="entry name" value="T_Tr_GTP-bd_dom"/>
</dbReference>
<dbReference type="InterPro" id="IPR000178">
    <property type="entry name" value="TF_IF2_bacterial-like"/>
</dbReference>
<dbReference type="InterPro" id="IPR015760">
    <property type="entry name" value="TIF_IF2"/>
</dbReference>
<dbReference type="InterPro" id="IPR023115">
    <property type="entry name" value="TIF_IF2_dom3"/>
</dbReference>
<dbReference type="InterPro" id="IPR036925">
    <property type="entry name" value="TIF_IF2_dom3_sf"/>
</dbReference>
<dbReference type="InterPro" id="IPR009000">
    <property type="entry name" value="Transl_B-barrel_sf"/>
</dbReference>
<dbReference type="NCBIfam" id="TIGR00487">
    <property type="entry name" value="IF-2"/>
    <property type="match status" value="1"/>
</dbReference>
<dbReference type="NCBIfam" id="TIGR00231">
    <property type="entry name" value="small_GTP"/>
    <property type="match status" value="1"/>
</dbReference>
<dbReference type="PANTHER" id="PTHR43381:SF5">
    <property type="entry name" value="TR-TYPE G DOMAIN-CONTAINING PROTEIN"/>
    <property type="match status" value="1"/>
</dbReference>
<dbReference type="PANTHER" id="PTHR43381">
    <property type="entry name" value="TRANSLATION INITIATION FACTOR IF-2-RELATED"/>
    <property type="match status" value="1"/>
</dbReference>
<dbReference type="Pfam" id="PF22042">
    <property type="entry name" value="EF-G_D2"/>
    <property type="match status" value="1"/>
</dbReference>
<dbReference type="Pfam" id="PF00009">
    <property type="entry name" value="GTP_EFTU"/>
    <property type="match status" value="1"/>
</dbReference>
<dbReference type="Pfam" id="PF03144">
    <property type="entry name" value="GTP_EFTU_D2"/>
    <property type="match status" value="1"/>
</dbReference>
<dbReference type="Pfam" id="PF11987">
    <property type="entry name" value="IF-2"/>
    <property type="match status" value="1"/>
</dbReference>
<dbReference type="Pfam" id="PF08364">
    <property type="entry name" value="IF2_assoc"/>
    <property type="match status" value="1"/>
</dbReference>
<dbReference type="Pfam" id="PF04760">
    <property type="entry name" value="IF2_N"/>
    <property type="match status" value="1"/>
</dbReference>
<dbReference type="SUPFAM" id="SSF52156">
    <property type="entry name" value="Initiation factor IF2/eIF5b, domain 3"/>
    <property type="match status" value="1"/>
</dbReference>
<dbReference type="SUPFAM" id="SSF52540">
    <property type="entry name" value="P-loop containing nucleoside triphosphate hydrolases"/>
    <property type="match status" value="1"/>
</dbReference>
<dbReference type="SUPFAM" id="SSF46955">
    <property type="entry name" value="Putative DNA-binding domain"/>
    <property type="match status" value="1"/>
</dbReference>
<dbReference type="SUPFAM" id="SSF50447">
    <property type="entry name" value="Translation proteins"/>
    <property type="match status" value="2"/>
</dbReference>
<dbReference type="PROSITE" id="PS51722">
    <property type="entry name" value="G_TR_2"/>
    <property type="match status" value="1"/>
</dbReference>
<dbReference type="PROSITE" id="PS01176">
    <property type="entry name" value="IF2"/>
    <property type="match status" value="1"/>
</dbReference>
<name>IF2_BUCAI</name>
<gene>
    <name type="primary">infB</name>
    <name type="ordered locus">BU377</name>
</gene>
<feature type="chain" id="PRO_0000137180" description="Translation initiation factor IF-2">
    <location>
        <begin position="1"/>
        <end position="864"/>
    </location>
</feature>
<feature type="domain" description="tr-type G">
    <location>
        <begin position="364"/>
        <end position="533"/>
    </location>
</feature>
<feature type="region of interest" description="Disordered" evidence="2">
    <location>
        <begin position="140"/>
        <end position="179"/>
    </location>
</feature>
<feature type="region of interest" description="G1" evidence="1">
    <location>
        <begin position="373"/>
        <end position="380"/>
    </location>
</feature>
<feature type="region of interest" description="G2" evidence="1">
    <location>
        <begin position="398"/>
        <end position="402"/>
    </location>
</feature>
<feature type="region of interest" description="G3" evidence="1">
    <location>
        <begin position="419"/>
        <end position="422"/>
    </location>
</feature>
<feature type="region of interest" description="G4" evidence="1">
    <location>
        <begin position="473"/>
        <end position="476"/>
    </location>
</feature>
<feature type="region of interest" description="G5" evidence="1">
    <location>
        <begin position="509"/>
        <end position="511"/>
    </location>
</feature>
<feature type="compositionally biased region" description="Basic and acidic residues" evidence="2">
    <location>
        <begin position="140"/>
        <end position="171"/>
    </location>
</feature>
<feature type="binding site" evidence="1">
    <location>
        <begin position="373"/>
        <end position="380"/>
    </location>
    <ligand>
        <name>GTP</name>
        <dbReference type="ChEBI" id="CHEBI:37565"/>
    </ligand>
</feature>
<feature type="binding site" evidence="1">
    <location>
        <begin position="419"/>
        <end position="423"/>
    </location>
    <ligand>
        <name>GTP</name>
        <dbReference type="ChEBI" id="CHEBI:37565"/>
    </ligand>
</feature>
<feature type="binding site" evidence="1">
    <location>
        <begin position="473"/>
        <end position="476"/>
    </location>
    <ligand>
        <name>GTP</name>
        <dbReference type="ChEBI" id="CHEBI:37565"/>
    </ligand>
</feature>
<keyword id="KW-0963">Cytoplasm</keyword>
<keyword id="KW-0342">GTP-binding</keyword>
<keyword id="KW-0396">Initiation factor</keyword>
<keyword id="KW-0547">Nucleotide-binding</keyword>
<keyword id="KW-0648">Protein biosynthesis</keyword>
<keyword id="KW-1185">Reference proteome</keyword>
<reference key="1">
    <citation type="journal article" date="2000" name="Nature">
        <title>Genome sequence of the endocellular bacterial symbiont of aphids Buchnera sp. APS.</title>
        <authorList>
            <person name="Shigenobu S."/>
            <person name="Watanabe H."/>
            <person name="Hattori M."/>
            <person name="Sakaki Y."/>
            <person name="Ishikawa H."/>
        </authorList>
    </citation>
    <scope>NUCLEOTIDE SEQUENCE [LARGE SCALE GENOMIC DNA]</scope>
    <source>
        <strain>APS</strain>
    </source>
</reference>